<accession>P39768</accession>
<accession>A0JQ21</accession>
<accession>Q960Y0</accession>
<accession>Q9VN66</accession>
<proteinExistence type="evidence at protein level"/>
<reference key="1">
    <citation type="journal article" date="1994" name="Genes Dev.">
        <title>Odd-paired: a zinc finger pair-rule protein required for the timely activation of engrailed and wingless in Drosophila embryos.</title>
        <authorList>
            <person name="Benedyk M.J."/>
            <person name="Mullen J.R."/>
            <person name="Dinardo S."/>
        </authorList>
    </citation>
    <scope>NUCLEOTIDE SEQUENCE [MRNA]</scope>
    <scope>FUNCTION</scope>
    <scope>TISSUE SPECIFICITY</scope>
    <scope>DEVELOPMENTAL STAGE</scope>
    <source>
        <tissue>Embryo</tissue>
    </source>
</reference>
<reference key="2">
    <citation type="journal article" date="1995" name="Dev. Biol.">
        <title>Drosophila midgut morphogenesis requires the function of the segmentation gene odd-paired.</title>
        <authorList>
            <person name="Cimbora D.M."/>
            <person name="Sakonju S."/>
        </authorList>
    </citation>
    <scope>NUCLEOTIDE SEQUENCE [MRNA]</scope>
    <scope>FUNCTION</scope>
    <scope>TISSUE SPECIFICITY</scope>
    <scope>DEVELOPMENTAL STAGE</scope>
</reference>
<reference key="3">
    <citation type="journal article" date="2000" name="Science">
        <title>The genome sequence of Drosophila melanogaster.</title>
        <authorList>
            <person name="Adams M.D."/>
            <person name="Celniker S.E."/>
            <person name="Holt R.A."/>
            <person name="Evans C.A."/>
            <person name="Gocayne J.D."/>
            <person name="Amanatides P.G."/>
            <person name="Scherer S.E."/>
            <person name="Li P.W."/>
            <person name="Hoskins R.A."/>
            <person name="Galle R.F."/>
            <person name="George R.A."/>
            <person name="Lewis S.E."/>
            <person name="Richards S."/>
            <person name="Ashburner M."/>
            <person name="Henderson S.N."/>
            <person name="Sutton G.G."/>
            <person name="Wortman J.R."/>
            <person name="Yandell M.D."/>
            <person name="Zhang Q."/>
            <person name="Chen L.X."/>
            <person name="Brandon R.C."/>
            <person name="Rogers Y.-H.C."/>
            <person name="Blazej R.G."/>
            <person name="Champe M."/>
            <person name="Pfeiffer B.D."/>
            <person name="Wan K.H."/>
            <person name="Doyle C."/>
            <person name="Baxter E.G."/>
            <person name="Helt G."/>
            <person name="Nelson C.R."/>
            <person name="Miklos G.L.G."/>
            <person name="Abril J.F."/>
            <person name="Agbayani A."/>
            <person name="An H.-J."/>
            <person name="Andrews-Pfannkoch C."/>
            <person name="Baldwin D."/>
            <person name="Ballew R.M."/>
            <person name="Basu A."/>
            <person name="Baxendale J."/>
            <person name="Bayraktaroglu L."/>
            <person name="Beasley E.M."/>
            <person name="Beeson K.Y."/>
            <person name="Benos P.V."/>
            <person name="Berman B.P."/>
            <person name="Bhandari D."/>
            <person name="Bolshakov S."/>
            <person name="Borkova D."/>
            <person name="Botchan M.R."/>
            <person name="Bouck J."/>
            <person name="Brokstein P."/>
            <person name="Brottier P."/>
            <person name="Burtis K.C."/>
            <person name="Busam D.A."/>
            <person name="Butler H."/>
            <person name="Cadieu E."/>
            <person name="Center A."/>
            <person name="Chandra I."/>
            <person name="Cherry J.M."/>
            <person name="Cawley S."/>
            <person name="Dahlke C."/>
            <person name="Davenport L.B."/>
            <person name="Davies P."/>
            <person name="de Pablos B."/>
            <person name="Delcher A."/>
            <person name="Deng Z."/>
            <person name="Mays A.D."/>
            <person name="Dew I."/>
            <person name="Dietz S.M."/>
            <person name="Dodson K."/>
            <person name="Doup L.E."/>
            <person name="Downes M."/>
            <person name="Dugan-Rocha S."/>
            <person name="Dunkov B.C."/>
            <person name="Dunn P."/>
            <person name="Durbin K.J."/>
            <person name="Evangelista C.C."/>
            <person name="Ferraz C."/>
            <person name="Ferriera S."/>
            <person name="Fleischmann W."/>
            <person name="Fosler C."/>
            <person name="Gabrielian A.E."/>
            <person name="Garg N.S."/>
            <person name="Gelbart W.M."/>
            <person name="Glasser K."/>
            <person name="Glodek A."/>
            <person name="Gong F."/>
            <person name="Gorrell J.H."/>
            <person name="Gu Z."/>
            <person name="Guan P."/>
            <person name="Harris M."/>
            <person name="Harris N.L."/>
            <person name="Harvey D.A."/>
            <person name="Heiman T.J."/>
            <person name="Hernandez J.R."/>
            <person name="Houck J."/>
            <person name="Hostin D."/>
            <person name="Houston K.A."/>
            <person name="Howland T.J."/>
            <person name="Wei M.-H."/>
            <person name="Ibegwam C."/>
            <person name="Jalali M."/>
            <person name="Kalush F."/>
            <person name="Karpen G.H."/>
            <person name="Ke Z."/>
            <person name="Kennison J.A."/>
            <person name="Ketchum K.A."/>
            <person name="Kimmel B.E."/>
            <person name="Kodira C.D."/>
            <person name="Kraft C.L."/>
            <person name="Kravitz S."/>
            <person name="Kulp D."/>
            <person name="Lai Z."/>
            <person name="Lasko P."/>
            <person name="Lei Y."/>
            <person name="Levitsky A.A."/>
            <person name="Li J.H."/>
            <person name="Li Z."/>
            <person name="Liang Y."/>
            <person name="Lin X."/>
            <person name="Liu X."/>
            <person name="Mattei B."/>
            <person name="McIntosh T.C."/>
            <person name="McLeod M.P."/>
            <person name="McPherson D."/>
            <person name="Merkulov G."/>
            <person name="Milshina N.V."/>
            <person name="Mobarry C."/>
            <person name="Morris J."/>
            <person name="Moshrefi A."/>
            <person name="Mount S.M."/>
            <person name="Moy M."/>
            <person name="Murphy B."/>
            <person name="Murphy L."/>
            <person name="Muzny D.M."/>
            <person name="Nelson D.L."/>
            <person name="Nelson D.R."/>
            <person name="Nelson K.A."/>
            <person name="Nixon K."/>
            <person name="Nusskern D.R."/>
            <person name="Pacleb J.M."/>
            <person name="Palazzolo M."/>
            <person name="Pittman G.S."/>
            <person name="Pan S."/>
            <person name="Pollard J."/>
            <person name="Puri V."/>
            <person name="Reese M.G."/>
            <person name="Reinert K."/>
            <person name="Remington K."/>
            <person name="Saunders R.D.C."/>
            <person name="Scheeler F."/>
            <person name="Shen H."/>
            <person name="Shue B.C."/>
            <person name="Siden-Kiamos I."/>
            <person name="Simpson M."/>
            <person name="Skupski M.P."/>
            <person name="Smith T.J."/>
            <person name="Spier E."/>
            <person name="Spradling A.C."/>
            <person name="Stapleton M."/>
            <person name="Strong R."/>
            <person name="Sun E."/>
            <person name="Svirskas R."/>
            <person name="Tector C."/>
            <person name="Turner R."/>
            <person name="Venter E."/>
            <person name="Wang A.H."/>
            <person name="Wang X."/>
            <person name="Wang Z.-Y."/>
            <person name="Wassarman D.A."/>
            <person name="Weinstock G.M."/>
            <person name="Weissenbach J."/>
            <person name="Williams S.M."/>
            <person name="Woodage T."/>
            <person name="Worley K.C."/>
            <person name="Wu D."/>
            <person name="Yang S."/>
            <person name="Yao Q.A."/>
            <person name="Ye J."/>
            <person name="Yeh R.-F."/>
            <person name="Zaveri J.S."/>
            <person name="Zhan M."/>
            <person name="Zhang G."/>
            <person name="Zhao Q."/>
            <person name="Zheng L."/>
            <person name="Zheng X.H."/>
            <person name="Zhong F.N."/>
            <person name="Zhong W."/>
            <person name="Zhou X."/>
            <person name="Zhu S.C."/>
            <person name="Zhu X."/>
            <person name="Smith H.O."/>
            <person name="Gibbs R.A."/>
            <person name="Myers E.W."/>
            <person name="Rubin G.M."/>
            <person name="Venter J.C."/>
        </authorList>
    </citation>
    <scope>NUCLEOTIDE SEQUENCE [LARGE SCALE GENOMIC DNA]</scope>
    <source>
        <strain>Berkeley</strain>
    </source>
</reference>
<reference key="4">
    <citation type="journal article" date="2002" name="Genome Biol.">
        <title>Annotation of the Drosophila melanogaster euchromatic genome: a systematic review.</title>
        <authorList>
            <person name="Misra S."/>
            <person name="Crosby M.A."/>
            <person name="Mungall C.J."/>
            <person name="Matthews B.B."/>
            <person name="Campbell K.S."/>
            <person name="Hradecky P."/>
            <person name="Huang Y."/>
            <person name="Kaminker J.S."/>
            <person name="Millburn G.H."/>
            <person name="Prochnik S.E."/>
            <person name="Smith C.D."/>
            <person name="Tupy J.L."/>
            <person name="Whitfield E.J."/>
            <person name="Bayraktaroglu L."/>
            <person name="Berman B.P."/>
            <person name="Bettencourt B.R."/>
            <person name="Celniker S.E."/>
            <person name="de Grey A.D.N.J."/>
            <person name="Drysdale R.A."/>
            <person name="Harris N.L."/>
            <person name="Richter J."/>
            <person name="Russo S."/>
            <person name="Schroeder A.J."/>
            <person name="Shu S.Q."/>
            <person name="Stapleton M."/>
            <person name="Yamada C."/>
            <person name="Ashburner M."/>
            <person name="Gelbart W.M."/>
            <person name="Rubin G.M."/>
            <person name="Lewis S.E."/>
        </authorList>
    </citation>
    <scope>GENOME REANNOTATION</scope>
    <source>
        <strain>Berkeley</strain>
    </source>
</reference>
<reference key="5">
    <citation type="journal article" date="2002" name="Genome Biol.">
        <title>A Drosophila full-length cDNA resource.</title>
        <authorList>
            <person name="Stapleton M."/>
            <person name="Carlson J.W."/>
            <person name="Brokstein P."/>
            <person name="Yu C."/>
            <person name="Champe M."/>
            <person name="George R.A."/>
            <person name="Guarin H."/>
            <person name="Kronmiller B."/>
            <person name="Pacleb J.M."/>
            <person name="Park S."/>
            <person name="Wan K.H."/>
            <person name="Rubin G.M."/>
            <person name="Celniker S.E."/>
        </authorList>
    </citation>
    <scope>NUCLEOTIDE SEQUENCE [LARGE SCALE MRNA]</scope>
    <source>
        <strain>Berkeley</strain>
        <tissue>Embryo</tissue>
    </source>
</reference>
<reference key="6">
    <citation type="submission" date="2006-11" db="EMBL/GenBank/DDBJ databases">
        <authorList>
            <person name="Stapleton M."/>
            <person name="Carlson J.W."/>
            <person name="Frise E."/>
            <person name="Kapadia B."/>
            <person name="Park S."/>
            <person name="Wan K.H."/>
            <person name="Yu C."/>
            <person name="Celniker S.E."/>
        </authorList>
    </citation>
    <scope>NUCLEOTIDE SEQUENCE [LARGE SCALE MRNA]</scope>
    <source>
        <strain>Berkeley</strain>
    </source>
</reference>
<keyword id="KW-0010">Activator</keyword>
<keyword id="KW-0217">Developmental protein</keyword>
<keyword id="KW-0238">DNA-binding</keyword>
<keyword id="KW-0479">Metal-binding</keyword>
<keyword id="KW-0539">Nucleus</keyword>
<keyword id="KW-0562">Pair-rule protein</keyword>
<keyword id="KW-1185">Reference proteome</keyword>
<keyword id="KW-0677">Repeat</keyword>
<keyword id="KW-0804">Transcription</keyword>
<keyword id="KW-0805">Transcription regulation</keyword>
<keyword id="KW-0862">Zinc</keyword>
<keyword id="KW-0863">Zinc-finger</keyword>
<dbReference type="EMBL" id="U04435">
    <property type="protein sequence ID" value="AAA18958.1"/>
    <property type="molecule type" value="mRNA"/>
</dbReference>
<dbReference type="EMBL" id="S78339">
    <property type="protein sequence ID" value="AAB34592.1"/>
    <property type="molecule type" value="mRNA"/>
</dbReference>
<dbReference type="EMBL" id="AE014297">
    <property type="protein sequence ID" value="AAF52084.1"/>
    <property type="molecule type" value="Genomic_DNA"/>
</dbReference>
<dbReference type="EMBL" id="AY051783">
    <property type="protein sequence ID" value="AAK93207.1"/>
    <property type="molecule type" value="mRNA"/>
</dbReference>
<dbReference type="EMBL" id="BT029391">
    <property type="protein sequence ID" value="ABK56895.1"/>
    <property type="molecule type" value="mRNA"/>
</dbReference>
<dbReference type="PIR" id="A49839">
    <property type="entry name" value="A49839"/>
</dbReference>
<dbReference type="RefSeq" id="NP_524228.2">
    <property type="nucleotide sequence ID" value="NM_079504.4"/>
</dbReference>
<dbReference type="SMR" id="P39768"/>
<dbReference type="BioGRID" id="65820">
    <property type="interactions" value="50"/>
</dbReference>
<dbReference type="DIP" id="DIP-17067N"/>
<dbReference type="FunCoup" id="P39768">
    <property type="interactions" value="146"/>
</dbReference>
<dbReference type="IntAct" id="P39768">
    <property type="interactions" value="25"/>
</dbReference>
<dbReference type="STRING" id="7227.FBpp0078477"/>
<dbReference type="PaxDb" id="7227-FBpp0078477"/>
<dbReference type="DNASU" id="40605"/>
<dbReference type="EnsemblMetazoa" id="FBtr0078836">
    <property type="protein sequence ID" value="FBpp0078477"/>
    <property type="gene ID" value="FBgn0003002"/>
</dbReference>
<dbReference type="GeneID" id="40605"/>
<dbReference type="KEGG" id="dme:Dmel_CG1133"/>
<dbReference type="AGR" id="FB:FBgn0003002"/>
<dbReference type="CTD" id="40605"/>
<dbReference type="FlyBase" id="FBgn0003002">
    <property type="gene designation" value="opa"/>
</dbReference>
<dbReference type="VEuPathDB" id="VectorBase:FBgn0003002"/>
<dbReference type="eggNOG" id="KOG1721">
    <property type="taxonomic scope" value="Eukaryota"/>
</dbReference>
<dbReference type="GeneTree" id="ENSGT00940000165216"/>
<dbReference type="HOGENOM" id="CLU_002678_37_2_1"/>
<dbReference type="InParanoid" id="P39768"/>
<dbReference type="OMA" id="AHPHHAM"/>
<dbReference type="OrthoDB" id="3214149at2759"/>
<dbReference type="PhylomeDB" id="P39768"/>
<dbReference type="SignaLink" id="P39768"/>
<dbReference type="BioGRID-ORCS" id="40605">
    <property type="hits" value="0 hits in 3 CRISPR screens"/>
</dbReference>
<dbReference type="GenomeRNAi" id="40605"/>
<dbReference type="PRO" id="PR:P39768"/>
<dbReference type="Proteomes" id="UP000000803">
    <property type="component" value="Chromosome 3R"/>
</dbReference>
<dbReference type="Bgee" id="FBgn0003002">
    <property type="expression patterns" value="Expressed in lamina wide-field cell Lawf2 (Drosophila) in insect head and 33 other cell types or tissues"/>
</dbReference>
<dbReference type="ExpressionAtlas" id="P39768">
    <property type="expression patterns" value="baseline and differential"/>
</dbReference>
<dbReference type="GO" id="GO:0005634">
    <property type="term" value="C:nucleus"/>
    <property type="evidence" value="ECO:0000314"/>
    <property type="project" value="FlyBase"/>
</dbReference>
<dbReference type="GO" id="GO:0001228">
    <property type="term" value="F:DNA-binding transcription activator activity, RNA polymerase II-specific"/>
    <property type="evidence" value="ECO:0000315"/>
    <property type="project" value="FlyBase"/>
</dbReference>
<dbReference type="GO" id="GO:0003700">
    <property type="term" value="F:DNA-binding transcription factor activity"/>
    <property type="evidence" value="ECO:0000250"/>
    <property type="project" value="FlyBase"/>
</dbReference>
<dbReference type="GO" id="GO:0000981">
    <property type="term" value="F:DNA-binding transcription factor activity, RNA polymerase II-specific"/>
    <property type="evidence" value="ECO:0000314"/>
    <property type="project" value="FlyBase"/>
</dbReference>
<dbReference type="GO" id="GO:0000978">
    <property type="term" value="F:RNA polymerase II cis-regulatory region sequence-specific DNA binding"/>
    <property type="evidence" value="ECO:0000314"/>
    <property type="project" value="FlyBase"/>
</dbReference>
<dbReference type="GO" id="GO:0000977">
    <property type="term" value="F:RNA polymerase II transcription regulatory region sequence-specific DNA binding"/>
    <property type="evidence" value="ECO:0000314"/>
    <property type="project" value="FlyBase"/>
</dbReference>
<dbReference type="GO" id="GO:0008270">
    <property type="term" value="F:zinc ion binding"/>
    <property type="evidence" value="ECO:0007669"/>
    <property type="project" value="UniProtKB-KW"/>
</dbReference>
<dbReference type="GO" id="GO:0007417">
    <property type="term" value="P:central nervous system development"/>
    <property type="evidence" value="ECO:0000318"/>
    <property type="project" value="GO_Central"/>
</dbReference>
<dbReference type="GO" id="GO:0007455">
    <property type="term" value="P:eye-antennal disc morphogenesis"/>
    <property type="evidence" value="ECO:0000315"/>
    <property type="project" value="FlyBase"/>
</dbReference>
<dbReference type="GO" id="GO:0008354">
    <property type="term" value="P:germ cell migration"/>
    <property type="evidence" value="ECO:0000315"/>
    <property type="project" value="FlyBase"/>
</dbReference>
<dbReference type="GO" id="GO:0007494">
    <property type="term" value="P:midgut development"/>
    <property type="evidence" value="ECO:0000315"/>
    <property type="project" value="FlyBase"/>
</dbReference>
<dbReference type="GO" id="GO:0000122">
    <property type="term" value="P:negative regulation of transcription by RNA polymerase II"/>
    <property type="evidence" value="ECO:0000318"/>
    <property type="project" value="GO_Central"/>
</dbReference>
<dbReference type="GO" id="GO:0007366">
    <property type="term" value="P:periodic partitioning by pair rule gene"/>
    <property type="evidence" value="ECO:0007669"/>
    <property type="project" value="UniProtKB-KW"/>
</dbReference>
<dbReference type="GO" id="GO:0045944">
    <property type="term" value="P:positive regulation of transcription by RNA polymerase II"/>
    <property type="evidence" value="ECO:0000315"/>
    <property type="project" value="FlyBase"/>
</dbReference>
<dbReference type="FunFam" id="3.30.160.60:FF:000035">
    <property type="entry name" value="Zinc finger protein ZIC 1"/>
    <property type="match status" value="1"/>
</dbReference>
<dbReference type="FunFam" id="3.30.160.60:FF:000039">
    <property type="entry name" value="Zinc finger protein ZIC 1"/>
    <property type="match status" value="1"/>
</dbReference>
<dbReference type="FunFam" id="3.30.160.60:FF:000041">
    <property type="entry name" value="Zinc finger protein ZIC 1"/>
    <property type="match status" value="1"/>
</dbReference>
<dbReference type="FunFam" id="3.30.160.60:FF:000050">
    <property type="entry name" value="zinc finger protein ZIC 1"/>
    <property type="match status" value="1"/>
</dbReference>
<dbReference type="Gene3D" id="3.30.160.60">
    <property type="entry name" value="Classic Zinc Finger"/>
    <property type="match status" value="4"/>
</dbReference>
<dbReference type="InterPro" id="IPR043359">
    <property type="entry name" value="GLI-like"/>
</dbReference>
<dbReference type="InterPro" id="IPR056436">
    <property type="entry name" value="Znf-C2H2_ZIC1-5/GLI1-3-like"/>
</dbReference>
<dbReference type="InterPro" id="IPR036236">
    <property type="entry name" value="Znf_C2H2_sf"/>
</dbReference>
<dbReference type="InterPro" id="IPR013087">
    <property type="entry name" value="Znf_C2H2_type"/>
</dbReference>
<dbReference type="InterPro" id="IPR041643">
    <property type="entry name" value="Znf_ZIC"/>
</dbReference>
<dbReference type="PANTHER" id="PTHR45718">
    <property type="entry name" value="TRANSCRIPTIONAL ACTIVATOR CUBITUS INTERRUPTUS"/>
    <property type="match status" value="1"/>
</dbReference>
<dbReference type="PANTHER" id="PTHR45718:SF4">
    <property type="entry name" value="TRANSCRIPTIONAL ACTIVATOR CUBITUS INTERRUPTUS"/>
    <property type="match status" value="1"/>
</dbReference>
<dbReference type="Pfam" id="PF00096">
    <property type="entry name" value="zf-C2H2"/>
    <property type="match status" value="2"/>
</dbReference>
<dbReference type="Pfam" id="PF23561">
    <property type="entry name" value="zf-C2H2_15"/>
    <property type="match status" value="1"/>
</dbReference>
<dbReference type="Pfam" id="PF18366">
    <property type="entry name" value="zf_ZIC"/>
    <property type="match status" value="1"/>
</dbReference>
<dbReference type="SMART" id="SM00355">
    <property type="entry name" value="ZnF_C2H2"/>
    <property type="match status" value="5"/>
</dbReference>
<dbReference type="SUPFAM" id="SSF57667">
    <property type="entry name" value="beta-beta-alpha zinc fingers"/>
    <property type="match status" value="2"/>
</dbReference>
<dbReference type="PROSITE" id="PS00028">
    <property type="entry name" value="ZINC_FINGER_C2H2_1"/>
    <property type="match status" value="3"/>
</dbReference>
<dbReference type="PROSITE" id="PS50157">
    <property type="entry name" value="ZINC_FINGER_C2H2_2"/>
    <property type="match status" value="4"/>
</dbReference>
<organism>
    <name type="scientific">Drosophila melanogaster</name>
    <name type="common">Fruit fly</name>
    <dbReference type="NCBI Taxonomy" id="7227"/>
    <lineage>
        <taxon>Eukaryota</taxon>
        <taxon>Metazoa</taxon>
        <taxon>Ecdysozoa</taxon>
        <taxon>Arthropoda</taxon>
        <taxon>Hexapoda</taxon>
        <taxon>Insecta</taxon>
        <taxon>Pterygota</taxon>
        <taxon>Neoptera</taxon>
        <taxon>Endopterygota</taxon>
        <taxon>Diptera</taxon>
        <taxon>Brachycera</taxon>
        <taxon>Muscomorpha</taxon>
        <taxon>Ephydroidea</taxon>
        <taxon>Drosophilidae</taxon>
        <taxon>Drosophila</taxon>
        <taxon>Sophophora</taxon>
    </lineage>
</organism>
<comment type="function">
    <text evidence="3 4">Transcription factor essential for parasegmental subdivision of the embryo. It is involved in the activation of wingless (wg) in odd parasegments. It is also required for the timely activation of wg in the remaining parasegments and for the timely activation of engrailed (en) in all parasegments.</text>
</comment>
<comment type="interaction">
    <interactant intactId="EBI-93813">
        <id>P39768</id>
    </interactant>
    <interactant intactId="EBI-15116127">
        <id>Q9VM83</id>
        <label>Dmel\CG17376</label>
    </interactant>
    <organismsDiffer>false</organismsDiffer>
    <experiments>4</experiments>
</comment>
<comment type="subcellular location">
    <subcellularLocation>
        <location evidence="5">Nucleus</location>
    </subcellularLocation>
</comment>
<comment type="tissue specificity">
    <text evidence="3 4">Expressed throughout all segment primordia; expressed ubiquitously in the ectoderm and mesoderm precursors.</text>
</comment>
<comment type="developmental stage">
    <text evidence="3 4">The peak expression is seen between 2 and 12 hours of embryogenesis. Expression continues through the larval instars and during pupation although at lower levels compared with embryogenesis.</text>
</comment>
<comment type="similarity">
    <text evidence="5">Belongs to the GLI C2H2-type zinc-finger protein family.</text>
</comment>
<evidence type="ECO:0000255" key="1">
    <source>
        <dbReference type="PROSITE-ProRule" id="PRU00042"/>
    </source>
</evidence>
<evidence type="ECO:0000256" key="2">
    <source>
        <dbReference type="SAM" id="MobiDB-lite"/>
    </source>
</evidence>
<evidence type="ECO:0000269" key="3">
    <source>
    </source>
</evidence>
<evidence type="ECO:0000269" key="4">
    <source>
    </source>
</evidence>
<evidence type="ECO:0000305" key="5"/>
<gene>
    <name type="primary">opa</name>
    <name type="ORF">CG1133</name>
</gene>
<protein>
    <recommendedName>
        <fullName>Pair-rule protein odd-paired</fullName>
    </recommendedName>
</protein>
<feature type="chain" id="PRO_0000047015" description="Pair-rule protein odd-paired">
    <location>
        <begin position="1"/>
        <end position="609"/>
    </location>
</feature>
<feature type="zinc finger region" description="C2H2-type 1; atypical" evidence="1">
    <location>
        <begin position="210"/>
        <end position="249"/>
    </location>
</feature>
<feature type="zinc finger region" description="C2H2-type 2" evidence="1">
    <location>
        <begin position="258"/>
        <end position="285"/>
    </location>
</feature>
<feature type="zinc finger region" description="C2H2-type 3" evidence="1">
    <location>
        <begin position="291"/>
        <end position="315"/>
    </location>
</feature>
<feature type="zinc finger region" description="C2H2-type 4" evidence="1">
    <location>
        <begin position="321"/>
        <end position="345"/>
    </location>
</feature>
<feature type="zinc finger region" description="C2H2-type 5" evidence="1">
    <location>
        <begin position="351"/>
        <end position="375"/>
    </location>
</feature>
<feature type="region of interest" description="Disordered" evidence="2">
    <location>
        <begin position="20"/>
        <end position="41"/>
    </location>
</feature>
<feature type="region of interest" description="Disordered" evidence="2">
    <location>
        <begin position="373"/>
        <end position="550"/>
    </location>
</feature>
<feature type="region of interest" description="Disordered" evidence="2">
    <location>
        <begin position="583"/>
        <end position="609"/>
    </location>
</feature>
<feature type="compositionally biased region" description="Polar residues" evidence="2">
    <location>
        <begin position="22"/>
        <end position="32"/>
    </location>
</feature>
<feature type="compositionally biased region" description="Polar residues" evidence="2">
    <location>
        <begin position="399"/>
        <end position="409"/>
    </location>
</feature>
<feature type="compositionally biased region" description="Low complexity" evidence="2">
    <location>
        <begin position="414"/>
        <end position="434"/>
    </location>
</feature>
<feature type="compositionally biased region" description="Low complexity" evidence="2">
    <location>
        <begin position="449"/>
        <end position="498"/>
    </location>
</feature>
<feature type="compositionally biased region" description="Basic residues" evidence="2">
    <location>
        <begin position="528"/>
        <end position="537"/>
    </location>
</feature>
<feature type="compositionally biased region" description="Low complexity" evidence="2">
    <location>
        <begin position="538"/>
        <end position="550"/>
    </location>
</feature>
<feature type="compositionally biased region" description="Basic residues" evidence="2">
    <location>
        <begin position="591"/>
        <end position="601"/>
    </location>
</feature>
<feature type="sequence conflict" description="In Ref. 5; AAK93207." evidence="5" ref="5">
    <original>P</original>
    <variation>S</variation>
    <location>
        <position position="587"/>
    </location>
</feature>
<feature type="sequence conflict" description="In Ref. 1; AAA18958 and 2; AAB34592." evidence="5" ref="1 2">
    <original>A</original>
    <variation>R</variation>
    <location>
        <position position="606"/>
    </location>
</feature>
<sequence length="609" mass="66238">MMMNAFIEPAQHHLASYGLRMSPNTTASNSNAQQQQQQQLEMTQQQQQQQQQQQQQQQQDQESAAATAAAYQNSGYGHFNSYASRDFLLGRREAEYGVAGSAGQASAAADSMLFSGFPAQAAELGSGFGQHPFHSHHHHHQMRMGMADAYAAGHPYNHHGNFPTAAVHHPVVHHPSHHAMSAMHPAGAGAFLRYMRHQPASSASSVKQEMQCLWIDPDQPGLVPPGGRKTCNKVFHSMHEIVTHLTVEHVGGPECTTHACFWVGCSRNGRPFKAKYKLVNHIRVHTGEKPFACPHPGCGKVFARSENLKIHKRTHTGEKPFKCEHEGCDRRFANSSDRKKHSHVHTSDKPYNCRINGCDKSYTHPSSLRKHMKVHGNVDEKSPSHGYDSEGEESSSSSIITGGAQTPPSTRLDGSAGSSSGVSSLSGGSGIKSSPHSIKSEPNPMHSVHLGASSSGSSSTASSSASHLLQHQQHQHQQQQQQQQHQQQAQQQQQLTAHPSDPKSSPALQLMAASASAYLPPPLGPPPSHHHHPHHHQAAPSPGAAAASASMLHHNHHLLYHPAAQHHPPSDWYHTTAPSGSAEAMNPLNHFGHHHHHHHLMHPGAATAY</sequence>
<name>OPA_DROME</name>